<proteinExistence type="evidence at protein level"/>
<organismHost>
    <name type="scientific">Thermus thermophilus</name>
    <dbReference type="NCBI Taxonomy" id="274"/>
</organismHost>
<sequence length="146" mass="16641">MDKVKLFQTIGRVEYWERVPRLHAYGVFALPFPMDPDVNWAQWFTGPHPRAFLVSIHKYGPKAGHVYPTNLTDEDALLNVIGMVLDGHDYENDPNVTVTLKAAVPIEYVQQDPQAPALQPHQAVLDAAEVLKLKVIKGHYFFDYTR</sequence>
<comment type="function">
    <text evidence="1">Cooperatively binds the expanded capsid, thereby stabilizing the mature capsid shell and allowing the large viral DNA to be packaged (PubMed:30737287). Trimers of capsid decoration proteins molecules are located at local and icosahedral threefold axes and stabilize the expanded capsid, which shows increased spacing between capsomers (PubMed:30737287).</text>
</comment>
<comment type="subunit">
    <text evidence="1">Homotrimer (PubMed:30737287). Interacts with the major capsid protein (PubMed:30737287).</text>
</comment>
<comment type="subcellular location">
    <subcellularLocation>
        <location evidence="1">Virion</location>
    </subcellularLocation>
    <text evidence="1">Located between the capsid hexons.</text>
</comment>
<organism>
    <name type="scientific">Thermus virus P23-45</name>
    <name type="common">Thermus thermophilus phage P23-45</name>
    <dbReference type="NCBI Taxonomy" id="2914006"/>
    <lineage>
        <taxon>Viruses</taxon>
        <taxon>Duplodnaviria</taxon>
        <taxon>Heunggongvirae</taxon>
        <taxon>Uroviricota</taxon>
        <taxon>Caudoviricetes</taxon>
        <taxon>Oshimavirus</taxon>
        <taxon>Oshimavirus P2345</taxon>
    </lineage>
</organism>
<dbReference type="EMBL" id="EU100883">
    <property type="protein sequence ID" value="ABU96921.1"/>
    <property type="molecule type" value="Genomic_DNA"/>
</dbReference>
<dbReference type="RefSeq" id="YP_001467941.1">
    <property type="nucleotide sequence ID" value="NC_009803.1"/>
</dbReference>
<dbReference type="PDB" id="6I9E">
    <property type="method" value="X-ray"/>
    <property type="resolution" value="3.74 A"/>
    <property type="chains" value="H/I/J/K/L/M/N=1-146"/>
</dbReference>
<dbReference type="PDBsum" id="6I9E"/>
<dbReference type="EMDB" id="EMD-4433"/>
<dbReference type="SMR" id="A7XXC1"/>
<dbReference type="GeneID" id="5600470"/>
<dbReference type="KEGG" id="vg:5600470"/>
<dbReference type="Proteomes" id="UP000001132">
    <property type="component" value="Genome"/>
</dbReference>
<dbReference type="GO" id="GO:0098021">
    <property type="term" value="C:viral capsid, decoration"/>
    <property type="evidence" value="ECO:0007669"/>
    <property type="project" value="UniProtKB-KW"/>
</dbReference>
<feature type="chain" id="PRO_0000447198" description="Decoration protein">
    <location>
        <begin position="1"/>
        <end position="146"/>
    </location>
</feature>
<reference key="1">
    <citation type="journal article" date="2008" name="J. Mol. Biol.">
        <title>Genome comparison and proteomic characterization of Thermus thermophilus bacteriophages P23-45 and P74-26: siphoviruses with triplex-forming sequences and the longest known tails.</title>
        <authorList>
            <person name="Minakhin L."/>
            <person name="Goel M."/>
            <person name="Berdygulova Z."/>
            <person name="Ramanculov E."/>
            <person name="Florens L."/>
            <person name="Glazko G."/>
            <person name="Karamychev V.N."/>
            <person name="Slesarev A.I."/>
            <person name="Kozyavkin S.A."/>
            <person name="Khromov I."/>
            <person name="Ackermann H.W."/>
            <person name="Washburn M."/>
            <person name="Mushegian A."/>
            <person name="Severinov K."/>
        </authorList>
    </citation>
    <scope>NUCLEOTIDE SEQUENCE [GENOMIC DNA]</scope>
</reference>
<reference key="2">
    <citation type="journal article" date="2019" name="Proc. Natl. Acad. Sci. U.S.A.">
        <title>Cryo-EM structure and in vitro DNA packaging of a thermophilic virus with supersized T=7 capsids.</title>
        <authorList>
            <person name="Bayfield O.W."/>
            <person name="Klimuk E."/>
            <person name="Winkler D.C."/>
            <person name="Hesketh E.L."/>
            <person name="Chechik M."/>
            <person name="Cheng N."/>
            <person name="Dykeman E.C."/>
            <person name="Minakhin L."/>
            <person name="Ranson N.A."/>
            <person name="Severinov K."/>
            <person name="Steven A.C."/>
            <person name="Antson A.A."/>
        </authorList>
    </citation>
    <scope>STRUCTURE BY ELECTRON MICROSCOPY (3.74 ANGSTROMS)</scope>
    <scope>SUBUNIT</scope>
    <scope>INTERACTION WITH THE CAPSID PROTEIN</scope>
    <scope>FUNCTION</scope>
    <scope>SUBCELLULAR LOCATION</scope>
</reference>
<protein>
    <recommendedName>
        <fullName evidence="3">Decoration protein</fullName>
    </recommendedName>
    <alternativeName>
        <fullName evidence="2">Auxiliary protein</fullName>
    </alternativeName>
    <alternativeName>
        <fullName evidence="3">Gene product 88</fullName>
        <shortName evidence="3">gp88</shortName>
    </alternativeName>
</protein>
<name>DECO_BP234</name>
<evidence type="ECO:0000269" key="1">
    <source>
    </source>
</evidence>
<evidence type="ECO:0000303" key="2">
    <source>
    </source>
</evidence>
<evidence type="ECO:0000305" key="3"/>
<evidence type="ECO:0000312" key="4">
    <source>
        <dbReference type="EMBL" id="ABU96921.1"/>
    </source>
</evidence>
<keyword id="KW-0002">3D-structure</keyword>
<keyword id="KW-1232">Capsid decoration protein</keyword>
<keyword id="KW-0167">Capsid protein</keyword>
<keyword id="KW-1185">Reference proteome</keyword>
<keyword id="KW-0946">Virion</keyword>
<gene>
    <name evidence="4" type="ORF">P23p88</name>
</gene>
<accession>A7XXC1</accession>